<feature type="chain" id="PRO_1000010078" description="DNA mismatch repair protein MutL">
    <location>
        <begin position="1"/>
        <end position="627"/>
    </location>
</feature>
<feature type="region of interest" description="Disordered" evidence="2">
    <location>
        <begin position="363"/>
        <end position="397"/>
    </location>
</feature>
<feature type="compositionally biased region" description="Low complexity" evidence="2">
    <location>
        <begin position="364"/>
        <end position="387"/>
    </location>
</feature>
<evidence type="ECO:0000255" key="1">
    <source>
        <dbReference type="HAMAP-Rule" id="MF_00149"/>
    </source>
</evidence>
<evidence type="ECO:0000256" key="2">
    <source>
        <dbReference type="SAM" id="MobiDB-lite"/>
    </source>
</evidence>
<protein>
    <recommendedName>
        <fullName evidence="1">DNA mismatch repair protein MutL</fullName>
    </recommendedName>
</protein>
<accession>Q0SXB2</accession>
<reference key="1">
    <citation type="journal article" date="2006" name="BMC Genomics">
        <title>Complete genome sequence of Shigella flexneri 5b and comparison with Shigella flexneri 2a.</title>
        <authorList>
            <person name="Nie H."/>
            <person name="Yang F."/>
            <person name="Zhang X."/>
            <person name="Yang J."/>
            <person name="Chen L."/>
            <person name="Wang J."/>
            <person name="Xiong Z."/>
            <person name="Peng J."/>
            <person name="Sun L."/>
            <person name="Dong J."/>
            <person name="Xue Y."/>
            <person name="Xu X."/>
            <person name="Chen S."/>
            <person name="Yao Z."/>
            <person name="Shen Y."/>
            <person name="Jin Q."/>
        </authorList>
    </citation>
    <scope>NUCLEOTIDE SEQUENCE [LARGE SCALE GENOMIC DNA]</scope>
    <source>
        <strain>8401</strain>
    </source>
</reference>
<keyword id="KW-0227">DNA damage</keyword>
<keyword id="KW-0234">DNA repair</keyword>
<gene>
    <name evidence="1" type="primary">mutL</name>
    <name type="ordered locus">SFV_4328</name>
</gene>
<sequence length="627" mass="69275">MPIQVLPPQLANQIAAGEVVERPASVVKELVENSLDAGATRIDIDIERGGAKLIRIRDNGCGIKKDELALALARHATSKIASLDDLEAIISLGFRGEALASISSVSRLTLTSRTAEQQEAWQAYAEGRDMDVTVKPAAHPVGTTLEVLDLFYNTPARRKFLRTEKTEFSHIDEIIRRIALARFDVTINLSHNGKIVRQYRAVPEGGQKERRLGAICGTAFLEQALAIEWQHGDLTLRGWVADPNHTTPALAEIQYCYVNGRMMRDRLINHAIRQACEDKLGADQQPAFVLYLEIDPHQVDVNVHPAKHEVRFHQSRLVHDFIYQGVLSVLQQQLETPLPLDDEPQPAPRAIPENRVAAGRNHFAEPAAREPVAPRYSPAPASGSRPAAPWPNAQPGYQKQQGEVYRQLLQTPAPMQKPKAPEPQEPALAANSQSFGRVLTIVHSDCALLERDGNISLLSLPVAERWLRQAQLTPGEAPVCAQPLLIPLRLKVSGEEKSALEKAQSALAELGIDFQSDAQHVTIRAVPLPLRQQNLQILIPELIGYLAKQSVFEPGNIAQWIARNLMSEHAQWIARNLMSEHAQWSMAQAITLLADVERLCPQLVKTPPGGLLQSVDLHPAIKALKDE</sequence>
<proteinExistence type="inferred from homology"/>
<comment type="function">
    <text evidence="1">This protein is involved in the repair of mismatches in DNA. It is required for dam-dependent methyl-directed DNA mismatch repair. May act as a 'molecular matchmaker', a protein that promotes the formation of a stable complex between two or more DNA-binding proteins in an ATP-dependent manner without itself being part of a final effector complex.</text>
</comment>
<comment type="similarity">
    <text evidence="1">Belongs to the DNA mismatch repair MutL/HexB family.</text>
</comment>
<dbReference type="EMBL" id="CP000266">
    <property type="protein sequence ID" value="ABF06303.1"/>
    <property type="molecule type" value="Genomic_DNA"/>
</dbReference>
<dbReference type="RefSeq" id="WP_001122489.1">
    <property type="nucleotide sequence ID" value="NC_008258.1"/>
</dbReference>
<dbReference type="SMR" id="Q0SXB2"/>
<dbReference type="KEGG" id="sfv:SFV_4328"/>
<dbReference type="HOGENOM" id="CLU_004131_5_1_6"/>
<dbReference type="Proteomes" id="UP000000659">
    <property type="component" value="Chromosome"/>
</dbReference>
<dbReference type="GO" id="GO:0032300">
    <property type="term" value="C:mismatch repair complex"/>
    <property type="evidence" value="ECO:0007669"/>
    <property type="project" value="InterPro"/>
</dbReference>
<dbReference type="GO" id="GO:0005524">
    <property type="term" value="F:ATP binding"/>
    <property type="evidence" value="ECO:0007669"/>
    <property type="project" value="InterPro"/>
</dbReference>
<dbReference type="GO" id="GO:0016887">
    <property type="term" value="F:ATP hydrolysis activity"/>
    <property type="evidence" value="ECO:0007669"/>
    <property type="project" value="InterPro"/>
</dbReference>
<dbReference type="GO" id="GO:0140664">
    <property type="term" value="F:ATP-dependent DNA damage sensor activity"/>
    <property type="evidence" value="ECO:0007669"/>
    <property type="project" value="InterPro"/>
</dbReference>
<dbReference type="GO" id="GO:0030983">
    <property type="term" value="F:mismatched DNA binding"/>
    <property type="evidence" value="ECO:0007669"/>
    <property type="project" value="InterPro"/>
</dbReference>
<dbReference type="GO" id="GO:0006298">
    <property type="term" value="P:mismatch repair"/>
    <property type="evidence" value="ECO:0007669"/>
    <property type="project" value="UniProtKB-UniRule"/>
</dbReference>
<dbReference type="CDD" id="cd16926">
    <property type="entry name" value="HATPase_MutL-MLH-PMS-like"/>
    <property type="match status" value="1"/>
</dbReference>
<dbReference type="CDD" id="cd03482">
    <property type="entry name" value="MutL_Trans_MutL"/>
    <property type="match status" value="1"/>
</dbReference>
<dbReference type="FunFam" id="3.30.230.10:FF:000013">
    <property type="entry name" value="DNA mismatch repair endonuclease MutL"/>
    <property type="match status" value="1"/>
</dbReference>
<dbReference type="FunFam" id="3.30.565.10:FF:000003">
    <property type="entry name" value="DNA mismatch repair endonuclease MutL"/>
    <property type="match status" value="1"/>
</dbReference>
<dbReference type="FunFam" id="3.30.1370.100:FF:000002">
    <property type="entry name" value="DNA mismatch repair protein MutL"/>
    <property type="match status" value="1"/>
</dbReference>
<dbReference type="Gene3D" id="3.30.230.10">
    <property type="match status" value="1"/>
</dbReference>
<dbReference type="Gene3D" id="3.30.565.10">
    <property type="entry name" value="Histidine kinase-like ATPase, C-terminal domain"/>
    <property type="match status" value="1"/>
</dbReference>
<dbReference type="Gene3D" id="3.30.1540.20">
    <property type="entry name" value="MutL, C-terminal domain, dimerisation subdomain"/>
    <property type="match status" value="1"/>
</dbReference>
<dbReference type="Gene3D" id="3.30.1370.100">
    <property type="entry name" value="MutL, C-terminal domain, regulatory subdomain"/>
    <property type="match status" value="1"/>
</dbReference>
<dbReference type="HAMAP" id="MF_00149">
    <property type="entry name" value="DNA_mis_repair"/>
    <property type="match status" value="1"/>
</dbReference>
<dbReference type="InterPro" id="IPR014762">
    <property type="entry name" value="DNA_mismatch_repair_CS"/>
</dbReference>
<dbReference type="InterPro" id="IPR020667">
    <property type="entry name" value="DNA_mismatch_repair_MutL"/>
</dbReference>
<dbReference type="InterPro" id="IPR013507">
    <property type="entry name" value="DNA_mismatch_S5_2-like"/>
</dbReference>
<dbReference type="InterPro" id="IPR036890">
    <property type="entry name" value="HATPase_C_sf"/>
</dbReference>
<dbReference type="InterPro" id="IPR002099">
    <property type="entry name" value="MutL/Mlh/PMS"/>
</dbReference>
<dbReference type="InterPro" id="IPR038973">
    <property type="entry name" value="MutL/Mlh/Pms-like"/>
</dbReference>
<dbReference type="InterPro" id="IPR014790">
    <property type="entry name" value="MutL_C"/>
</dbReference>
<dbReference type="InterPro" id="IPR042120">
    <property type="entry name" value="MutL_C_dimsub"/>
</dbReference>
<dbReference type="InterPro" id="IPR042121">
    <property type="entry name" value="MutL_C_regsub"/>
</dbReference>
<dbReference type="InterPro" id="IPR037198">
    <property type="entry name" value="MutL_C_sf"/>
</dbReference>
<dbReference type="InterPro" id="IPR020568">
    <property type="entry name" value="Ribosomal_Su5_D2-typ_SF"/>
</dbReference>
<dbReference type="InterPro" id="IPR014721">
    <property type="entry name" value="Ribsml_uS5_D2-typ_fold_subgr"/>
</dbReference>
<dbReference type="NCBIfam" id="TIGR00585">
    <property type="entry name" value="mutl"/>
    <property type="match status" value="1"/>
</dbReference>
<dbReference type="NCBIfam" id="NF000948">
    <property type="entry name" value="PRK00095.1-1"/>
    <property type="match status" value="1"/>
</dbReference>
<dbReference type="PANTHER" id="PTHR10073">
    <property type="entry name" value="DNA MISMATCH REPAIR PROTEIN MLH, PMS, MUTL"/>
    <property type="match status" value="1"/>
</dbReference>
<dbReference type="PANTHER" id="PTHR10073:SF12">
    <property type="entry name" value="DNA MISMATCH REPAIR PROTEIN MLH1"/>
    <property type="match status" value="1"/>
</dbReference>
<dbReference type="Pfam" id="PF01119">
    <property type="entry name" value="DNA_mis_repair"/>
    <property type="match status" value="1"/>
</dbReference>
<dbReference type="Pfam" id="PF13589">
    <property type="entry name" value="HATPase_c_3"/>
    <property type="match status" value="1"/>
</dbReference>
<dbReference type="Pfam" id="PF08676">
    <property type="entry name" value="MutL_C"/>
    <property type="match status" value="1"/>
</dbReference>
<dbReference type="SMART" id="SM01340">
    <property type="entry name" value="DNA_mis_repair"/>
    <property type="match status" value="1"/>
</dbReference>
<dbReference type="SMART" id="SM00853">
    <property type="entry name" value="MutL_C"/>
    <property type="match status" value="1"/>
</dbReference>
<dbReference type="SUPFAM" id="SSF55874">
    <property type="entry name" value="ATPase domain of HSP90 chaperone/DNA topoisomerase II/histidine kinase"/>
    <property type="match status" value="1"/>
</dbReference>
<dbReference type="SUPFAM" id="SSF118116">
    <property type="entry name" value="DNA mismatch repair protein MutL"/>
    <property type="match status" value="1"/>
</dbReference>
<dbReference type="SUPFAM" id="SSF54211">
    <property type="entry name" value="Ribosomal protein S5 domain 2-like"/>
    <property type="match status" value="1"/>
</dbReference>
<dbReference type="PROSITE" id="PS00058">
    <property type="entry name" value="DNA_MISMATCH_REPAIR_1"/>
    <property type="match status" value="1"/>
</dbReference>
<name>MUTL_SHIF8</name>
<organism>
    <name type="scientific">Shigella flexneri serotype 5b (strain 8401)</name>
    <dbReference type="NCBI Taxonomy" id="373384"/>
    <lineage>
        <taxon>Bacteria</taxon>
        <taxon>Pseudomonadati</taxon>
        <taxon>Pseudomonadota</taxon>
        <taxon>Gammaproteobacteria</taxon>
        <taxon>Enterobacterales</taxon>
        <taxon>Enterobacteriaceae</taxon>
        <taxon>Shigella</taxon>
    </lineage>
</organism>